<keyword id="KW-0150">Chloroplast</keyword>
<keyword id="KW-0472">Membrane</keyword>
<keyword id="KW-0520">NAD</keyword>
<keyword id="KW-0521">NADP</keyword>
<keyword id="KW-0934">Plastid</keyword>
<keyword id="KW-0618">Plastoquinone</keyword>
<keyword id="KW-0874">Quinone</keyword>
<keyword id="KW-0793">Thylakoid</keyword>
<keyword id="KW-1278">Translocase</keyword>
<keyword id="KW-0812">Transmembrane</keyword>
<keyword id="KW-1133">Transmembrane helix</keyword>
<keyword id="KW-0813">Transport</keyword>
<gene>
    <name evidence="1" type="primary">ndhE</name>
</gene>
<comment type="function">
    <text evidence="1">NDH shuttles electrons from NAD(P)H:plastoquinone, via FMN and iron-sulfur (Fe-S) centers, to quinones in the photosynthetic chain and possibly in a chloroplast respiratory chain. The immediate electron acceptor for the enzyme in this species is believed to be plastoquinone. Couples the redox reaction to proton translocation, and thus conserves the redox energy in a proton gradient.</text>
</comment>
<comment type="catalytic activity">
    <reaction evidence="1">
        <text>a plastoquinone + NADH + (n+1) H(+)(in) = a plastoquinol + NAD(+) + n H(+)(out)</text>
        <dbReference type="Rhea" id="RHEA:42608"/>
        <dbReference type="Rhea" id="RHEA-COMP:9561"/>
        <dbReference type="Rhea" id="RHEA-COMP:9562"/>
        <dbReference type="ChEBI" id="CHEBI:15378"/>
        <dbReference type="ChEBI" id="CHEBI:17757"/>
        <dbReference type="ChEBI" id="CHEBI:57540"/>
        <dbReference type="ChEBI" id="CHEBI:57945"/>
        <dbReference type="ChEBI" id="CHEBI:62192"/>
    </reaction>
</comment>
<comment type="catalytic activity">
    <reaction evidence="1">
        <text>a plastoquinone + NADPH + (n+1) H(+)(in) = a plastoquinol + NADP(+) + n H(+)(out)</text>
        <dbReference type="Rhea" id="RHEA:42612"/>
        <dbReference type="Rhea" id="RHEA-COMP:9561"/>
        <dbReference type="Rhea" id="RHEA-COMP:9562"/>
        <dbReference type="ChEBI" id="CHEBI:15378"/>
        <dbReference type="ChEBI" id="CHEBI:17757"/>
        <dbReference type="ChEBI" id="CHEBI:57783"/>
        <dbReference type="ChEBI" id="CHEBI:58349"/>
        <dbReference type="ChEBI" id="CHEBI:62192"/>
    </reaction>
</comment>
<comment type="subunit">
    <text evidence="1">NDH is composed of at least 16 different subunits, 5 of which are encoded in the nucleus.</text>
</comment>
<comment type="subcellular location">
    <subcellularLocation>
        <location evidence="1">Plastid</location>
        <location evidence="1">Chloroplast thylakoid membrane</location>
        <topology evidence="1">Multi-pass membrane protein</topology>
    </subcellularLocation>
</comment>
<comment type="similarity">
    <text evidence="1">Belongs to the complex I subunit 4L family.</text>
</comment>
<sequence length="101" mass="11177">MMLEHVLVLGAYLFSIGIYGLITSRNMVRALMCLELILNAVNINLVTFSDFFDSRQLKGDILSIFVIAIAAAEAAIGLAIVSSIYRNRKSTRINQSNLLNK</sequence>
<organism>
    <name type="scientific">Buxus microphylla</name>
    <name type="common">Littleleaf boxwood</name>
    <name type="synonym">Japanese boxwood</name>
    <dbReference type="NCBI Taxonomy" id="153571"/>
    <lineage>
        <taxon>Eukaryota</taxon>
        <taxon>Viridiplantae</taxon>
        <taxon>Streptophyta</taxon>
        <taxon>Embryophyta</taxon>
        <taxon>Tracheophyta</taxon>
        <taxon>Spermatophyta</taxon>
        <taxon>Magnoliopsida</taxon>
        <taxon>Buxales</taxon>
        <taxon>Buxaceae</taxon>
        <taxon>Buxus</taxon>
    </lineage>
</organism>
<accession>A6MM89</accession>
<name>NU4LC_BUXMI</name>
<dbReference type="EC" id="7.1.1.-" evidence="1"/>
<dbReference type="EMBL" id="EF380351">
    <property type="protein sequence ID" value="ABQ45302.1"/>
    <property type="molecule type" value="Genomic_DNA"/>
</dbReference>
<dbReference type="RefSeq" id="YP_001294237.1">
    <property type="nucleotide sequence ID" value="NC_009599.1"/>
</dbReference>
<dbReference type="SMR" id="A6MM89"/>
<dbReference type="GeneID" id="5236886"/>
<dbReference type="GO" id="GO:0009535">
    <property type="term" value="C:chloroplast thylakoid membrane"/>
    <property type="evidence" value="ECO:0007669"/>
    <property type="project" value="UniProtKB-SubCell"/>
</dbReference>
<dbReference type="GO" id="GO:0030964">
    <property type="term" value="C:NADH dehydrogenase complex"/>
    <property type="evidence" value="ECO:0007669"/>
    <property type="project" value="TreeGrafter"/>
</dbReference>
<dbReference type="GO" id="GO:0016655">
    <property type="term" value="F:oxidoreductase activity, acting on NAD(P)H, quinone or similar compound as acceptor"/>
    <property type="evidence" value="ECO:0007669"/>
    <property type="project" value="UniProtKB-UniRule"/>
</dbReference>
<dbReference type="GO" id="GO:0048038">
    <property type="term" value="F:quinone binding"/>
    <property type="evidence" value="ECO:0007669"/>
    <property type="project" value="UniProtKB-KW"/>
</dbReference>
<dbReference type="GO" id="GO:0042773">
    <property type="term" value="P:ATP synthesis coupled electron transport"/>
    <property type="evidence" value="ECO:0007669"/>
    <property type="project" value="InterPro"/>
</dbReference>
<dbReference type="GO" id="GO:0019684">
    <property type="term" value="P:photosynthesis, light reaction"/>
    <property type="evidence" value="ECO:0007669"/>
    <property type="project" value="UniProtKB-UniRule"/>
</dbReference>
<dbReference type="FunFam" id="1.10.287.3510:FF:000001">
    <property type="entry name" value="NADH-quinone oxidoreductase subunit K"/>
    <property type="match status" value="1"/>
</dbReference>
<dbReference type="Gene3D" id="1.10.287.3510">
    <property type="match status" value="1"/>
</dbReference>
<dbReference type="HAMAP" id="MF_01456">
    <property type="entry name" value="NDH1_NuoK"/>
    <property type="match status" value="1"/>
</dbReference>
<dbReference type="InterPro" id="IPR001133">
    <property type="entry name" value="NADH_UbQ_OxRdtase_chain4L/K"/>
</dbReference>
<dbReference type="InterPro" id="IPR039428">
    <property type="entry name" value="NUOK/Mnh_C1-like"/>
</dbReference>
<dbReference type="NCBIfam" id="NF004320">
    <property type="entry name" value="PRK05715.1-2"/>
    <property type="match status" value="1"/>
</dbReference>
<dbReference type="NCBIfam" id="NF004322">
    <property type="entry name" value="PRK05715.1-4"/>
    <property type="match status" value="1"/>
</dbReference>
<dbReference type="PANTHER" id="PTHR11434:SF16">
    <property type="entry name" value="NADH-UBIQUINONE OXIDOREDUCTASE CHAIN 4L"/>
    <property type="match status" value="1"/>
</dbReference>
<dbReference type="PANTHER" id="PTHR11434">
    <property type="entry name" value="NADH-UBIQUINONE OXIDOREDUCTASE SUBUNIT ND4L"/>
    <property type="match status" value="1"/>
</dbReference>
<dbReference type="Pfam" id="PF00420">
    <property type="entry name" value="Oxidored_q2"/>
    <property type="match status" value="1"/>
</dbReference>
<feature type="chain" id="PRO_0000360309" description="NAD(P)H-quinone oxidoreductase subunit 4L, chloroplastic">
    <location>
        <begin position="1"/>
        <end position="101"/>
    </location>
</feature>
<feature type="transmembrane region" description="Helical" evidence="1">
    <location>
        <begin position="2"/>
        <end position="22"/>
    </location>
</feature>
<feature type="transmembrane region" description="Helical" evidence="1">
    <location>
        <begin position="32"/>
        <end position="52"/>
    </location>
</feature>
<feature type="transmembrane region" description="Helical" evidence="1">
    <location>
        <begin position="61"/>
        <end position="81"/>
    </location>
</feature>
<reference key="1">
    <citation type="journal article" date="2007" name="Mol. Phylogenet. Evol.">
        <title>Phylogenetic and evolutionary implications of complete chloroplast genome sequences of four early-diverging angiosperms: Buxus (Buxaceae), Chloranthus (Chloranthaceae), Dioscorea (Dioscoreaceae), and Illicium (Schisandraceae).</title>
        <authorList>
            <person name="Hansen D.R."/>
            <person name="Dastidar S.G."/>
            <person name="Cai Z."/>
            <person name="Penaflor C."/>
            <person name="Kuehl J.V."/>
            <person name="Boore J.L."/>
            <person name="Jansen R.K."/>
        </authorList>
    </citation>
    <scope>NUCLEOTIDE SEQUENCE [LARGE SCALE GENOMIC DNA]</scope>
</reference>
<proteinExistence type="inferred from homology"/>
<geneLocation type="chloroplast"/>
<evidence type="ECO:0000255" key="1">
    <source>
        <dbReference type="HAMAP-Rule" id="MF_01456"/>
    </source>
</evidence>
<protein>
    <recommendedName>
        <fullName evidence="1">NAD(P)H-quinone oxidoreductase subunit 4L, chloroplastic</fullName>
        <ecNumber evidence="1">7.1.1.-</ecNumber>
    </recommendedName>
    <alternativeName>
        <fullName evidence="1">NAD(P)H dehydrogenase subunit 4L</fullName>
    </alternativeName>
    <alternativeName>
        <fullName evidence="1">NADH-plastoquinone oxidoreductase subunit 4L</fullName>
    </alternativeName>
</protein>